<proteinExistence type="inferred from homology"/>
<keyword id="KW-0963">Cytoplasm</keyword>
<keyword id="KW-0342">GTP-binding</keyword>
<keyword id="KW-0436">Ligase</keyword>
<keyword id="KW-0460">Magnesium</keyword>
<keyword id="KW-0479">Metal-binding</keyword>
<keyword id="KW-0547">Nucleotide-binding</keyword>
<keyword id="KW-0658">Purine biosynthesis</keyword>
<keyword id="KW-1185">Reference proteome</keyword>
<dbReference type="EC" id="6.3.4.4" evidence="1"/>
<dbReference type="EMBL" id="CP000377">
    <property type="protein sequence ID" value="ABF64701.1"/>
    <property type="molecule type" value="Genomic_DNA"/>
</dbReference>
<dbReference type="RefSeq" id="WP_011539294.1">
    <property type="nucleotide sequence ID" value="NC_008044.1"/>
</dbReference>
<dbReference type="SMR" id="Q1GF65"/>
<dbReference type="STRING" id="292414.TM1040_1969"/>
<dbReference type="KEGG" id="sit:TM1040_1969"/>
<dbReference type="eggNOG" id="COG0104">
    <property type="taxonomic scope" value="Bacteria"/>
</dbReference>
<dbReference type="HOGENOM" id="CLU_029848_0_0_5"/>
<dbReference type="OrthoDB" id="9807553at2"/>
<dbReference type="UniPathway" id="UPA00075">
    <property type="reaction ID" value="UER00335"/>
</dbReference>
<dbReference type="Proteomes" id="UP000000636">
    <property type="component" value="Chromosome"/>
</dbReference>
<dbReference type="GO" id="GO:0005737">
    <property type="term" value="C:cytoplasm"/>
    <property type="evidence" value="ECO:0007669"/>
    <property type="project" value="UniProtKB-SubCell"/>
</dbReference>
<dbReference type="GO" id="GO:0004019">
    <property type="term" value="F:adenylosuccinate synthase activity"/>
    <property type="evidence" value="ECO:0007669"/>
    <property type="project" value="UniProtKB-UniRule"/>
</dbReference>
<dbReference type="GO" id="GO:0005525">
    <property type="term" value="F:GTP binding"/>
    <property type="evidence" value="ECO:0007669"/>
    <property type="project" value="UniProtKB-UniRule"/>
</dbReference>
<dbReference type="GO" id="GO:0000287">
    <property type="term" value="F:magnesium ion binding"/>
    <property type="evidence" value="ECO:0007669"/>
    <property type="project" value="UniProtKB-UniRule"/>
</dbReference>
<dbReference type="GO" id="GO:0044208">
    <property type="term" value="P:'de novo' AMP biosynthetic process"/>
    <property type="evidence" value="ECO:0007669"/>
    <property type="project" value="UniProtKB-UniRule"/>
</dbReference>
<dbReference type="GO" id="GO:0046040">
    <property type="term" value="P:IMP metabolic process"/>
    <property type="evidence" value="ECO:0007669"/>
    <property type="project" value="TreeGrafter"/>
</dbReference>
<dbReference type="CDD" id="cd03108">
    <property type="entry name" value="AdSS"/>
    <property type="match status" value="1"/>
</dbReference>
<dbReference type="FunFam" id="1.10.300.10:FF:000001">
    <property type="entry name" value="Adenylosuccinate synthetase"/>
    <property type="match status" value="1"/>
</dbReference>
<dbReference type="FunFam" id="3.90.170.10:FF:000001">
    <property type="entry name" value="Adenylosuccinate synthetase"/>
    <property type="match status" value="1"/>
</dbReference>
<dbReference type="Gene3D" id="3.40.440.10">
    <property type="entry name" value="Adenylosuccinate Synthetase, subunit A, domain 1"/>
    <property type="match status" value="1"/>
</dbReference>
<dbReference type="Gene3D" id="1.10.300.10">
    <property type="entry name" value="Adenylosuccinate Synthetase, subunit A, domain 2"/>
    <property type="match status" value="1"/>
</dbReference>
<dbReference type="Gene3D" id="3.90.170.10">
    <property type="entry name" value="Adenylosuccinate Synthetase, subunit A, domain 3"/>
    <property type="match status" value="1"/>
</dbReference>
<dbReference type="HAMAP" id="MF_00011">
    <property type="entry name" value="Adenylosucc_synth"/>
    <property type="match status" value="1"/>
</dbReference>
<dbReference type="InterPro" id="IPR018220">
    <property type="entry name" value="Adenylosuccin_syn_GTP-bd"/>
</dbReference>
<dbReference type="InterPro" id="IPR033128">
    <property type="entry name" value="Adenylosuccin_syn_Lys_AS"/>
</dbReference>
<dbReference type="InterPro" id="IPR042109">
    <property type="entry name" value="Adenylosuccinate_synth_dom1"/>
</dbReference>
<dbReference type="InterPro" id="IPR042110">
    <property type="entry name" value="Adenylosuccinate_synth_dom2"/>
</dbReference>
<dbReference type="InterPro" id="IPR042111">
    <property type="entry name" value="Adenylosuccinate_synth_dom3"/>
</dbReference>
<dbReference type="InterPro" id="IPR001114">
    <property type="entry name" value="Adenylosuccinate_synthetase"/>
</dbReference>
<dbReference type="InterPro" id="IPR027417">
    <property type="entry name" value="P-loop_NTPase"/>
</dbReference>
<dbReference type="NCBIfam" id="NF002223">
    <property type="entry name" value="PRK01117.1"/>
    <property type="match status" value="1"/>
</dbReference>
<dbReference type="NCBIfam" id="TIGR00184">
    <property type="entry name" value="purA"/>
    <property type="match status" value="1"/>
</dbReference>
<dbReference type="PANTHER" id="PTHR11846">
    <property type="entry name" value="ADENYLOSUCCINATE SYNTHETASE"/>
    <property type="match status" value="1"/>
</dbReference>
<dbReference type="PANTHER" id="PTHR11846:SF0">
    <property type="entry name" value="ADENYLOSUCCINATE SYNTHETASE"/>
    <property type="match status" value="1"/>
</dbReference>
<dbReference type="Pfam" id="PF00709">
    <property type="entry name" value="Adenylsucc_synt"/>
    <property type="match status" value="1"/>
</dbReference>
<dbReference type="SMART" id="SM00788">
    <property type="entry name" value="Adenylsucc_synt"/>
    <property type="match status" value="1"/>
</dbReference>
<dbReference type="SUPFAM" id="SSF52540">
    <property type="entry name" value="P-loop containing nucleoside triphosphate hydrolases"/>
    <property type="match status" value="1"/>
</dbReference>
<dbReference type="PROSITE" id="PS01266">
    <property type="entry name" value="ADENYLOSUCCIN_SYN_1"/>
    <property type="match status" value="1"/>
</dbReference>
<dbReference type="PROSITE" id="PS00513">
    <property type="entry name" value="ADENYLOSUCCIN_SYN_2"/>
    <property type="match status" value="1"/>
</dbReference>
<comment type="function">
    <text evidence="1">Plays an important role in the de novo pathway of purine nucleotide biosynthesis. Catalyzes the first committed step in the biosynthesis of AMP from IMP.</text>
</comment>
<comment type="catalytic activity">
    <reaction evidence="1">
        <text>IMP + L-aspartate + GTP = N(6)-(1,2-dicarboxyethyl)-AMP + GDP + phosphate + 2 H(+)</text>
        <dbReference type="Rhea" id="RHEA:15753"/>
        <dbReference type="ChEBI" id="CHEBI:15378"/>
        <dbReference type="ChEBI" id="CHEBI:29991"/>
        <dbReference type="ChEBI" id="CHEBI:37565"/>
        <dbReference type="ChEBI" id="CHEBI:43474"/>
        <dbReference type="ChEBI" id="CHEBI:57567"/>
        <dbReference type="ChEBI" id="CHEBI:58053"/>
        <dbReference type="ChEBI" id="CHEBI:58189"/>
        <dbReference type="EC" id="6.3.4.4"/>
    </reaction>
</comment>
<comment type="cofactor">
    <cofactor evidence="1">
        <name>Mg(2+)</name>
        <dbReference type="ChEBI" id="CHEBI:18420"/>
    </cofactor>
    <text evidence="1">Binds 1 Mg(2+) ion per subunit.</text>
</comment>
<comment type="pathway">
    <text evidence="1">Purine metabolism; AMP biosynthesis via de novo pathway; AMP from IMP: step 1/2.</text>
</comment>
<comment type="subunit">
    <text evidence="1">Homodimer.</text>
</comment>
<comment type="subcellular location">
    <subcellularLocation>
        <location evidence="1">Cytoplasm</location>
    </subcellularLocation>
</comment>
<comment type="similarity">
    <text evidence="1">Belongs to the adenylosuccinate synthetase family.</text>
</comment>
<gene>
    <name evidence="1" type="primary">purA</name>
    <name type="ordered locus">TM1040_1969</name>
</gene>
<reference key="1">
    <citation type="submission" date="2006-05" db="EMBL/GenBank/DDBJ databases">
        <title>Complete sequence of chromosome of Silicibacter sp. TM1040.</title>
        <authorList>
            <consortium name="US DOE Joint Genome Institute"/>
            <person name="Copeland A."/>
            <person name="Lucas S."/>
            <person name="Lapidus A."/>
            <person name="Barry K."/>
            <person name="Detter J.C."/>
            <person name="Glavina del Rio T."/>
            <person name="Hammon N."/>
            <person name="Israni S."/>
            <person name="Dalin E."/>
            <person name="Tice H."/>
            <person name="Pitluck S."/>
            <person name="Brettin T."/>
            <person name="Bruce D."/>
            <person name="Han C."/>
            <person name="Tapia R."/>
            <person name="Goodwin L."/>
            <person name="Thompson L.S."/>
            <person name="Gilna P."/>
            <person name="Schmutz J."/>
            <person name="Larimer F."/>
            <person name="Land M."/>
            <person name="Hauser L."/>
            <person name="Kyrpides N."/>
            <person name="Kim E."/>
            <person name="Belas R."/>
            <person name="Moran M.A."/>
            <person name="Buchan A."/>
            <person name="Gonzalez J.M."/>
            <person name="Schell M.A."/>
            <person name="Sun F."/>
            <person name="Richardson P."/>
        </authorList>
    </citation>
    <scope>NUCLEOTIDE SEQUENCE [LARGE SCALE GENOMIC DNA]</scope>
    <source>
        <strain>TM1040</strain>
    </source>
</reference>
<organism>
    <name type="scientific">Ruegeria sp. (strain TM1040)</name>
    <name type="common">Silicibacter sp.</name>
    <dbReference type="NCBI Taxonomy" id="292414"/>
    <lineage>
        <taxon>Bacteria</taxon>
        <taxon>Pseudomonadati</taxon>
        <taxon>Pseudomonadota</taxon>
        <taxon>Alphaproteobacteria</taxon>
        <taxon>Rhodobacterales</taxon>
        <taxon>Roseobacteraceae</taxon>
        <taxon>Ruegeria</taxon>
    </lineage>
</organism>
<feature type="chain" id="PRO_1000000920" description="Adenylosuccinate synthetase">
    <location>
        <begin position="1"/>
        <end position="437"/>
    </location>
</feature>
<feature type="region of interest" description="Disordered" evidence="2">
    <location>
        <begin position="281"/>
        <end position="304"/>
    </location>
</feature>
<feature type="compositionally biased region" description="Basic and acidic residues" evidence="2">
    <location>
        <begin position="288"/>
        <end position="303"/>
    </location>
</feature>
<feature type="active site" description="Proton acceptor" evidence="1">
    <location>
        <position position="13"/>
    </location>
</feature>
<feature type="active site" description="Proton donor" evidence="1">
    <location>
        <position position="41"/>
    </location>
</feature>
<feature type="binding site" evidence="1">
    <location>
        <begin position="12"/>
        <end position="18"/>
    </location>
    <ligand>
        <name>GTP</name>
        <dbReference type="ChEBI" id="CHEBI:37565"/>
    </ligand>
</feature>
<feature type="binding site" description="in other chain" evidence="1">
    <location>
        <begin position="13"/>
        <end position="16"/>
    </location>
    <ligand>
        <name>IMP</name>
        <dbReference type="ChEBI" id="CHEBI:58053"/>
        <note>ligand shared between dimeric partners</note>
    </ligand>
</feature>
<feature type="binding site" evidence="1">
    <location>
        <position position="13"/>
    </location>
    <ligand>
        <name>Mg(2+)</name>
        <dbReference type="ChEBI" id="CHEBI:18420"/>
    </ligand>
</feature>
<feature type="binding site" description="in other chain" evidence="1">
    <location>
        <begin position="38"/>
        <end position="41"/>
    </location>
    <ligand>
        <name>IMP</name>
        <dbReference type="ChEBI" id="CHEBI:58053"/>
        <note>ligand shared between dimeric partners</note>
    </ligand>
</feature>
<feature type="binding site" evidence="1">
    <location>
        <begin position="40"/>
        <end position="42"/>
    </location>
    <ligand>
        <name>GTP</name>
        <dbReference type="ChEBI" id="CHEBI:37565"/>
    </ligand>
</feature>
<feature type="binding site" evidence="1">
    <location>
        <position position="40"/>
    </location>
    <ligand>
        <name>Mg(2+)</name>
        <dbReference type="ChEBI" id="CHEBI:18420"/>
    </ligand>
</feature>
<feature type="binding site" description="in other chain" evidence="1">
    <location>
        <position position="131"/>
    </location>
    <ligand>
        <name>IMP</name>
        <dbReference type="ChEBI" id="CHEBI:58053"/>
        <note>ligand shared between dimeric partners</note>
    </ligand>
</feature>
<feature type="binding site" evidence="1">
    <location>
        <position position="145"/>
    </location>
    <ligand>
        <name>IMP</name>
        <dbReference type="ChEBI" id="CHEBI:58053"/>
        <note>ligand shared between dimeric partners</note>
    </ligand>
</feature>
<feature type="binding site" description="in other chain" evidence="1">
    <location>
        <position position="225"/>
    </location>
    <ligand>
        <name>IMP</name>
        <dbReference type="ChEBI" id="CHEBI:58053"/>
        <note>ligand shared between dimeric partners</note>
    </ligand>
</feature>
<feature type="binding site" description="in other chain" evidence="1">
    <location>
        <position position="240"/>
    </location>
    <ligand>
        <name>IMP</name>
        <dbReference type="ChEBI" id="CHEBI:58053"/>
        <note>ligand shared between dimeric partners</note>
    </ligand>
</feature>
<feature type="binding site" evidence="1">
    <location>
        <begin position="306"/>
        <end position="312"/>
    </location>
    <ligand>
        <name>substrate</name>
    </ligand>
</feature>
<feature type="binding site" description="in other chain" evidence="1">
    <location>
        <position position="310"/>
    </location>
    <ligand>
        <name>IMP</name>
        <dbReference type="ChEBI" id="CHEBI:58053"/>
        <note>ligand shared between dimeric partners</note>
    </ligand>
</feature>
<feature type="binding site" evidence="1">
    <location>
        <position position="312"/>
    </location>
    <ligand>
        <name>GTP</name>
        <dbReference type="ChEBI" id="CHEBI:37565"/>
    </ligand>
</feature>
<feature type="binding site" evidence="1">
    <location>
        <begin position="338"/>
        <end position="340"/>
    </location>
    <ligand>
        <name>GTP</name>
        <dbReference type="ChEBI" id="CHEBI:37565"/>
    </ligand>
</feature>
<feature type="binding site" evidence="1">
    <location>
        <begin position="420"/>
        <end position="422"/>
    </location>
    <ligand>
        <name>GTP</name>
        <dbReference type="ChEBI" id="CHEBI:37565"/>
    </ligand>
</feature>
<protein>
    <recommendedName>
        <fullName evidence="1">Adenylosuccinate synthetase</fullName>
        <shortName evidence="1">AMPSase</shortName>
        <shortName evidence="1">AdSS</shortName>
        <ecNumber evidence="1">6.3.4.4</ecNumber>
    </recommendedName>
    <alternativeName>
        <fullName evidence="1">IMP--aspartate ligase</fullName>
    </alternativeName>
</protein>
<sequence length="437" mass="47336">MANVVVVGAQWGDEGKGKIVDWLSERADVIARFQGGHNAGHTLVIDKKVYKLHALPSGVVRGGKLSVIGNGVVLDPWHLMKEIETVRAQGVEITPETLMIAENTPLIMPFHGELDRAREEAASKGTKIGTTGRGIGPAYEDKVGRRAIRVADLADDATLEARVDRALQHHDPLRKGLGVEPIDRDALVAQLKEIASEILPFAAPVWKVMNEKRKAGKRILFEGAQGALLDIDFGTYPFVTSSNVIAGQAATGVGIGPNSIDYVLGIVKAYTTRVGEGPFPTELLGADGKPDADGERLGTRGHEFGTTTGRQRRCGWFDACLVRQTCATSGINGISLTKLDVLDGFETLKICVGYELDGERLDYLPTAADQQARCKPIYEEMEGWSESTEGARSWAELPANAIKYVRRVEELIQCPVALLSTSPERDDTILVTDPFAD</sequence>
<name>PURA_RUEST</name>
<evidence type="ECO:0000255" key="1">
    <source>
        <dbReference type="HAMAP-Rule" id="MF_00011"/>
    </source>
</evidence>
<evidence type="ECO:0000256" key="2">
    <source>
        <dbReference type="SAM" id="MobiDB-lite"/>
    </source>
</evidence>
<accession>Q1GF65</accession>